<dbReference type="EC" id="1.11.1.7"/>
<dbReference type="SMR" id="P80679"/>
<dbReference type="PeroxiBase" id="298">
    <property type="entry name" value="AruPrx53-2"/>
</dbReference>
<dbReference type="GlyCosmos" id="P80679">
    <property type="glycosylation" value="7 sites, No reported glycans"/>
</dbReference>
<dbReference type="BRENDA" id="1.11.1.7">
    <property type="organism ID" value="429"/>
</dbReference>
<dbReference type="SABIO-RK" id="P80679"/>
<dbReference type="GO" id="GO:0020037">
    <property type="term" value="F:heme binding"/>
    <property type="evidence" value="ECO:0007669"/>
    <property type="project" value="InterPro"/>
</dbReference>
<dbReference type="GO" id="GO:0140825">
    <property type="term" value="F:lactoperoxidase activity"/>
    <property type="evidence" value="ECO:0007669"/>
    <property type="project" value="UniProtKB-EC"/>
</dbReference>
<dbReference type="GO" id="GO:0046872">
    <property type="term" value="F:metal ion binding"/>
    <property type="evidence" value="ECO:0007669"/>
    <property type="project" value="UniProtKB-KW"/>
</dbReference>
<dbReference type="GO" id="GO:0042744">
    <property type="term" value="P:hydrogen peroxide catabolic process"/>
    <property type="evidence" value="ECO:0007669"/>
    <property type="project" value="UniProtKB-KW"/>
</dbReference>
<dbReference type="GO" id="GO:0006979">
    <property type="term" value="P:response to oxidative stress"/>
    <property type="evidence" value="ECO:0007669"/>
    <property type="project" value="InterPro"/>
</dbReference>
<dbReference type="CDD" id="cd00693">
    <property type="entry name" value="secretory_peroxidase"/>
    <property type="match status" value="1"/>
</dbReference>
<dbReference type="FunFam" id="1.10.420.10:FF:000001">
    <property type="entry name" value="Peroxidase"/>
    <property type="match status" value="1"/>
</dbReference>
<dbReference type="FunFam" id="1.10.520.10:FF:000001">
    <property type="entry name" value="Peroxidase"/>
    <property type="match status" value="1"/>
</dbReference>
<dbReference type="Gene3D" id="1.10.520.10">
    <property type="match status" value="1"/>
</dbReference>
<dbReference type="Gene3D" id="1.10.420.10">
    <property type="entry name" value="Peroxidase, domain 2"/>
    <property type="match status" value="1"/>
</dbReference>
<dbReference type="InterPro" id="IPR002016">
    <property type="entry name" value="Haem_peroxidase"/>
</dbReference>
<dbReference type="InterPro" id="IPR010255">
    <property type="entry name" value="Haem_peroxidase_sf"/>
</dbReference>
<dbReference type="InterPro" id="IPR000823">
    <property type="entry name" value="Peroxidase_pln"/>
</dbReference>
<dbReference type="InterPro" id="IPR019794">
    <property type="entry name" value="Peroxidases_AS"/>
</dbReference>
<dbReference type="InterPro" id="IPR019793">
    <property type="entry name" value="Peroxidases_heam-ligand_BS"/>
</dbReference>
<dbReference type="InterPro" id="IPR033905">
    <property type="entry name" value="Secretory_peroxidase"/>
</dbReference>
<dbReference type="PANTHER" id="PTHR31388:SF139">
    <property type="entry name" value="PEROXIDASE 53"/>
    <property type="match status" value="1"/>
</dbReference>
<dbReference type="PANTHER" id="PTHR31388">
    <property type="entry name" value="PEROXIDASE 72-RELATED"/>
    <property type="match status" value="1"/>
</dbReference>
<dbReference type="Pfam" id="PF00141">
    <property type="entry name" value="peroxidase"/>
    <property type="match status" value="1"/>
</dbReference>
<dbReference type="PRINTS" id="PR00458">
    <property type="entry name" value="PEROXIDASE"/>
</dbReference>
<dbReference type="PRINTS" id="PR00461">
    <property type="entry name" value="PLPEROXIDASE"/>
</dbReference>
<dbReference type="SUPFAM" id="SSF48113">
    <property type="entry name" value="Heme-dependent peroxidases"/>
    <property type="match status" value="1"/>
</dbReference>
<dbReference type="PROSITE" id="PS00435">
    <property type="entry name" value="PEROXIDASE_1"/>
    <property type="match status" value="1"/>
</dbReference>
<dbReference type="PROSITE" id="PS00436">
    <property type="entry name" value="PEROXIDASE_2"/>
    <property type="match status" value="1"/>
</dbReference>
<dbReference type="PROSITE" id="PS50873">
    <property type="entry name" value="PEROXIDASE_4"/>
    <property type="match status" value="1"/>
</dbReference>
<accession>P80679</accession>
<sequence length="305" mass="31899">QLNATFYSGTCPNASAIVRSTIQQAFQSDTRIGASLIRLHFHDCFVDGCDASILLDDSGSIQSEKNAGPNANSARGFNVVDNIKTALENTCPGVVSCSDILALASEASVSLTGGPSWTVLLGRRDSLTANLAGANSAIPSPFEGLSNITSKFSAVGLNTNDLVALSGAHTFGRARCGVFNNRLFNFSGTNGPDPTLNSTLLSSLQQLCPQNGSASTITNLDLSTPDAFDNNYFANLQSNNGLLQSDQELFSTLGSATIAVVTSFASNQTLFFQAFAQSMINMGNISPLTGSNGEIRLDCKKVDGS</sequence>
<name>PERA2_ARMRU</name>
<comment type="function">
    <text>Removal of H(2)O(2), oxidation of toxic reductants, biosynthesis and degradation of lignin, suberization, auxin catabolism, response to environmental stresses such as wounding, pathogen attack and oxidative stress. These functions might be dependent on each isozyme/isoform in each plant tissue.</text>
</comment>
<comment type="catalytic activity">
    <reaction>
        <text>2 a phenolic donor + H2O2 = 2 a phenolic radical donor + 2 H2O</text>
        <dbReference type="Rhea" id="RHEA:56136"/>
        <dbReference type="ChEBI" id="CHEBI:15377"/>
        <dbReference type="ChEBI" id="CHEBI:16240"/>
        <dbReference type="ChEBI" id="CHEBI:139520"/>
        <dbReference type="ChEBI" id="CHEBI:139521"/>
        <dbReference type="EC" id="1.11.1.7"/>
    </reaction>
</comment>
<comment type="cofactor">
    <cofactor>
        <name>Ca(2+)</name>
        <dbReference type="ChEBI" id="CHEBI:29108"/>
    </cofactor>
    <text>Binds 2 calcium ions per subunit.</text>
</comment>
<comment type="cofactor">
    <cofactor>
        <name>heme b</name>
        <dbReference type="ChEBI" id="CHEBI:60344"/>
    </cofactor>
    <text>Binds 1 heme b (iron(II)-protoporphyrin IX) group per subunit.</text>
</comment>
<comment type="similarity">
    <text evidence="2">Belongs to the peroxidase family. Classical plant (class III) peroxidase subfamily.</text>
</comment>
<keyword id="KW-0106">Calcium</keyword>
<keyword id="KW-0903">Direct protein sequencing</keyword>
<keyword id="KW-1015">Disulfide bond</keyword>
<keyword id="KW-0325">Glycoprotein</keyword>
<keyword id="KW-0349">Heme</keyword>
<keyword id="KW-0376">Hydrogen peroxide</keyword>
<keyword id="KW-0408">Iron</keyword>
<keyword id="KW-0479">Metal-binding</keyword>
<keyword id="KW-0560">Oxidoreductase</keyword>
<keyword id="KW-0575">Peroxidase</keyword>
<keyword id="KW-0873">Pyrrolidone carboxylic acid</keyword>
<gene>
    <name type="primary">HRPA2</name>
</gene>
<protein>
    <recommendedName>
        <fullName>Peroxidase A2</fullName>
        <ecNumber>1.11.1.7</ecNumber>
    </recommendedName>
</protein>
<feature type="chain" id="PRO_0000055604" description="Peroxidase A2">
    <location>
        <begin position="1"/>
        <end position="305"/>
    </location>
</feature>
<feature type="active site" description="Proton acceptor">
    <location>
        <position position="42"/>
    </location>
</feature>
<feature type="binding site" evidence="2">
    <location>
        <position position="43"/>
    </location>
    <ligand>
        <name>Ca(2+)</name>
        <dbReference type="ChEBI" id="CHEBI:29108"/>
        <label>1</label>
    </ligand>
</feature>
<feature type="binding site" evidence="2">
    <location>
        <position position="46"/>
    </location>
    <ligand>
        <name>Ca(2+)</name>
        <dbReference type="ChEBI" id="CHEBI:29108"/>
        <label>1</label>
    </ligand>
</feature>
<feature type="binding site" evidence="2">
    <location>
        <position position="48"/>
    </location>
    <ligand>
        <name>Ca(2+)</name>
        <dbReference type="ChEBI" id="CHEBI:29108"/>
        <label>1</label>
    </ligand>
</feature>
<feature type="binding site" evidence="2">
    <location>
        <position position="50"/>
    </location>
    <ligand>
        <name>Ca(2+)</name>
        <dbReference type="ChEBI" id="CHEBI:29108"/>
        <label>1</label>
    </ligand>
</feature>
<feature type="binding site" evidence="2">
    <location>
        <position position="52"/>
    </location>
    <ligand>
        <name>Ca(2+)</name>
        <dbReference type="ChEBI" id="CHEBI:29108"/>
        <label>1</label>
    </ligand>
</feature>
<feature type="binding site">
    <location>
        <position position="139"/>
    </location>
    <ligand>
        <name>substrate</name>
    </ligand>
</feature>
<feature type="binding site" description="axial binding residue">
    <location>
        <position position="169"/>
    </location>
    <ligand>
        <name>heme b</name>
        <dbReference type="ChEBI" id="CHEBI:60344"/>
    </ligand>
    <ligandPart>
        <name>Fe</name>
        <dbReference type="ChEBI" id="CHEBI:18248"/>
    </ligandPart>
</feature>
<feature type="binding site" evidence="2">
    <location>
        <position position="170"/>
    </location>
    <ligand>
        <name>Ca(2+)</name>
        <dbReference type="ChEBI" id="CHEBI:29108"/>
        <label>2</label>
    </ligand>
</feature>
<feature type="binding site" evidence="2">
    <location>
        <position position="221"/>
    </location>
    <ligand>
        <name>Ca(2+)</name>
        <dbReference type="ChEBI" id="CHEBI:29108"/>
        <label>2</label>
    </ligand>
</feature>
<feature type="binding site" evidence="2">
    <location>
        <position position="224"/>
    </location>
    <ligand>
        <name>Ca(2+)</name>
        <dbReference type="ChEBI" id="CHEBI:29108"/>
        <label>2</label>
    </ligand>
</feature>
<feature type="binding site" evidence="2">
    <location>
        <position position="229"/>
    </location>
    <ligand>
        <name>Ca(2+)</name>
        <dbReference type="ChEBI" id="CHEBI:29108"/>
        <label>2</label>
    </ligand>
</feature>
<feature type="site" description="Transition state stabilizer">
    <location>
        <position position="38"/>
    </location>
</feature>
<feature type="modified residue" description="Pyrrolidone carboxylic acid" evidence="1">
    <location>
        <position position="1"/>
    </location>
</feature>
<feature type="glycosylation site" description="N-linked (GlcNAc...) asparagine">
    <location>
        <position position="3"/>
    </location>
</feature>
<feature type="glycosylation site" description="N-linked (GlcNAc...) asparagine">
    <location>
        <position position="13"/>
    </location>
</feature>
<feature type="glycosylation site" description="N-linked (GlcNAc...) asparagine">
    <location>
        <position position="147"/>
    </location>
</feature>
<feature type="glycosylation site" description="N-linked (GlcNAc...) asparagine">
    <location>
        <position position="185"/>
    </location>
</feature>
<feature type="glycosylation site" description="N-linked (GlcNAc...) asparagine">
    <location>
        <position position="197"/>
    </location>
</feature>
<feature type="glycosylation site" description="N-linked (GlcNAc...) asparagine">
    <location>
        <position position="211"/>
    </location>
</feature>
<feature type="glycosylation site" description="N-linked (GlcNAc...) asparagine">
    <location>
        <position position="267"/>
    </location>
</feature>
<feature type="disulfide bond">
    <location>
        <begin position="11"/>
        <end position="91"/>
    </location>
</feature>
<feature type="disulfide bond">
    <location>
        <begin position="44"/>
        <end position="49"/>
    </location>
</feature>
<feature type="disulfide bond">
    <location>
        <begin position="97"/>
        <end position="299"/>
    </location>
</feature>
<feature type="disulfide bond">
    <location>
        <begin position="176"/>
        <end position="208"/>
    </location>
</feature>
<organism>
    <name type="scientific">Armoracia rusticana</name>
    <name type="common">Horseradish</name>
    <name type="synonym">Armoracia laphatifolia</name>
    <dbReference type="NCBI Taxonomy" id="3704"/>
    <lineage>
        <taxon>Eukaryota</taxon>
        <taxon>Viridiplantae</taxon>
        <taxon>Streptophyta</taxon>
        <taxon>Embryophyta</taxon>
        <taxon>Tracheophyta</taxon>
        <taxon>Spermatophyta</taxon>
        <taxon>Magnoliopsida</taxon>
        <taxon>eudicotyledons</taxon>
        <taxon>Gunneridae</taxon>
        <taxon>Pentapetalae</taxon>
        <taxon>rosids</taxon>
        <taxon>malvids</taxon>
        <taxon>Brassicales</taxon>
        <taxon>Brassicaceae</taxon>
        <taxon>Cardamineae</taxon>
        <taxon>Armoracia</taxon>
    </lineage>
</organism>
<evidence type="ECO:0000250" key="1">
    <source>
        <dbReference type="UniProtKB" id="Q42578"/>
    </source>
</evidence>
<evidence type="ECO:0000255" key="2">
    <source>
        <dbReference type="PROSITE-ProRule" id="PRU00297"/>
    </source>
</evidence>
<reference key="1">
    <citation type="submission" date="1996-08" db="UniProtKB">
        <authorList>
            <person name="Rasmussen C.B."/>
            <person name="Stoffer B."/>
            <person name="Welinder K.G."/>
        </authorList>
    </citation>
    <scope>PROTEIN SEQUENCE</scope>
</reference>
<reference key="2">
    <citation type="journal article" date="2001" name="Biochemistry">
        <title>Differential activity and structure of highly similar peroxidases. Spectroscopic, crystallographic, and enzymatic analyses of lignifying Arabidopsis thaliana peroxidase A2 and horseradish peroxidase A2.</title>
        <authorList>
            <person name="Nielsen K.L."/>
            <person name="Indiani C."/>
            <person name="Henriksen A."/>
            <person name="Feis A."/>
            <person name="Becucci M."/>
            <person name="Gajhede M."/>
            <person name="Smulevich G."/>
            <person name="Welinder K.G."/>
        </authorList>
    </citation>
    <scope>CHARACTERIZATION</scope>
</reference>
<proteinExistence type="evidence at protein level"/>